<name>VPU_HV1Z2</name>
<organismHost>
    <name type="scientific">Homo sapiens</name>
    <name type="common">Human</name>
    <dbReference type="NCBI Taxonomy" id="9606"/>
</organismHost>
<proteinExistence type="inferred from homology"/>
<organism>
    <name type="scientific">Human immunodeficiency virus type 1 group M subtype D (isolate Z2/CDC-Z34)</name>
    <name type="common">HIV-1</name>
    <dbReference type="NCBI Taxonomy" id="11683"/>
    <lineage>
        <taxon>Viruses</taxon>
        <taxon>Riboviria</taxon>
        <taxon>Pararnavirae</taxon>
        <taxon>Artverviricota</taxon>
        <taxon>Revtraviricetes</taxon>
        <taxon>Ortervirales</taxon>
        <taxon>Retroviridae</taxon>
        <taxon>Orthoretrovirinae</taxon>
        <taxon>Lentivirus</taxon>
        <taxon>Human immunodeficiency virus type 1</taxon>
    </lineage>
</organism>
<protein>
    <recommendedName>
        <fullName evidence="1">Protein Vpu</fullName>
    </recommendedName>
    <alternativeName>
        <fullName evidence="1">U ORF protein</fullName>
    </alternativeName>
    <alternativeName>
        <fullName evidence="1">Viral protein U</fullName>
    </alternativeName>
</protein>
<comment type="function">
    <text evidence="1">Enhances virion budding by targeting host CD4 and Tetherin/BST2 to proteasome degradation. Degradation of CD4 prevents any unwanted premature interactions between viral Env and its host receptor CD4 in the endoplasmic reticulum. Degradation of antiretroviral protein Tetherin/BST2 is important for virion budding, as BST2 tethers new viral particles to the host cell membrane. Mechanistically, Vpu bridges either CD4 or BST2 to BTRC, a substrate recognition subunit of the Skp1/Cullin/F-box protein E3 ubiquitin ligase, induces their ubiquitination and subsequent proteasomal degradation. The alteration of the E3 ligase specificity by Vpu seems to promote the degradation of host IKBKB, leading to NF-kappa-B down-regulation and subsequent apoptosis. Acts as a viroporin that forms an oligomeric ion channel in membranes. Modulates the host DNA repair mechanisms to promote degradation of nuclear viral cDNA in cells that are already productively infected in order to suppress immune sensing and proviral hyper-integration (superinfection). Manipulates PML-NBs and modulates SUMOylation of host BLM protein thereby enhancing its DNA-end processing activity toward viral unintegrated linear DNA. Also inhibits RAD52-mediated homologous repair of viral cDNA, preventing the generation of dead-end circular forms of single copies of the long terminal repeat and permitting sustained nucleolytic attack.</text>
</comment>
<comment type="activity regulation">
    <text evidence="1">Ion channel activity is inhibited by hexamethylene amiloride in vitro.</text>
</comment>
<comment type="subunit">
    <text evidence="1">Homopentamer. Interacts with host CD4 and BRTC; these interactions induce proteasomal degradation of CD4. Interacts with host BST2; this interaction leads to the degradation of host BST2. Interacts with host FBXW11. Interacts with host AP1M1; this interaction plays a role in the mistrafficking and subsequent degradation of host BST2. Interacts with host RANBP2; this interaction allows Vpu to down-regulate host BLM sumoylation.</text>
</comment>
<comment type="subcellular location">
    <subcellularLocation>
        <location evidence="1">Host membrane</location>
        <topology evidence="1">Single-pass type I membrane protein</topology>
    </subcellularLocation>
</comment>
<comment type="domain">
    <text evidence="1">The N-terminus and transmembrane domains are required for self-oligomerization and proper virion budding, whereas the cytoplasmic domain is required for CD4 degradation. The cytoplasmic domain is composed of 2 amphipathic alpha helix that form a U-shape.</text>
</comment>
<comment type="PTM">
    <text evidence="1">Phosphorylated by host CK2. This phosphorylation is necessary for interaction with human BTRC and degradation of CD4.</text>
</comment>
<comment type="miscellaneous">
    <text evidence="1">HIV-1 lineages are divided in three main groups, M (for Major), O (for Outlier), and N (for New, or Non-M, Non-O). The vast majority of strains found worldwide belong to the group M. Group O seems to be endemic to and largely confined to Cameroon and neighboring countries in West Central Africa, where these viruses represent a small minority of HIV-1 strains. The group N is represented by a limited number of isolates from Cameroonian persons. The group M is further subdivided in 9 clades or subtypes (A to D, F to H, J and K).</text>
</comment>
<comment type="similarity">
    <text evidence="1">Belongs to the HIV-1 VPU protein family.</text>
</comment>
<gene>
    <name evidence="1" type="primary">vpu</name>
</gene>
<reference key="1">
    <citation type="submission" date="1989-07" db="EMBL/GenBank/DDBJ databases">
        <authorList>
            <person name="Theodore T."/>
            <person name="Buckler-White A.J."/>
        </authorList>
    </citation>
    <scope>NUCLEOTIDE SEQUENCE [GENOMIC RNA]</scope>
</reference>
<feature type="chain" id="PRO_0000085414" description="Protein Vpu">
    <location>
        <begin position="1"/>
        <end position="81"/>
    </location>
</feature>
<feature type="topological domain" description="Extracellular" evidence="1">
    <location>
        <begin position="1"/>
        <end position="7"/>
    </location>
</feature>
<feature type="transmembrane region" description="Helical" evidence="1">
    <location>
        <begin position="8"/>
        <end position="28"/>
    </location>
</feature>
<feature type="topological domain" description="Cytoplasmic" evidence="1">
    <location>
        <begin position="29"/>
        <end position="81"/>
    </location>
</feature>
<feature type="modified residue" description="Phosphoserine; by host CK2" evidence="1">
    <location>
        <position position="53"/>
    </location>
</feature>
<feature type="modified residue" description="Phosphoserine; by host CK2" evidence="1">
    <location>
        <position position="57"/>
    </location>
</feature>
<dbReference type="EMBL" id="M22639">
    <property type="protein sequence ID" value="AAA45369.1"/>
    <property type="molecule type" value="Genomic_RNA"/>
</dbReference>
<dbReference type="PIR" id="S54383">
    <property type="entry name" value="S54383"/>
</dbReference>
<dbReference type="Proteomes" id="UP000155099">
    <property type="component" value="Genome"/>
</dbReference>
<dbReference type="GO" id="GO:0033644">
    <property type="term" value="C:host cell membrane"/>
    <property type="evidence" value="ECO:0007669"/>
    <property type="project" value="UniProtKB-SubCell"/>
</dbReference>
<dbReference type="GO" id="GO:0016020">
    <property type="term" value="C:membrane"/>
    <property type="evidence" value="ECO:0007669"/>
    <property type="project" value="UniProtKB-UniRule"/>
</dbReference>
<dbReference type="GO" id="GO:0042609">
    <property type="term" value="F:CD4 receptor binding"/>
    <property type="evidence" value="ECO:0007669"/>
    <property type="project" value="UniProtKB-UniRule"/>
</dbReference>
<dbReference type="GO" id="GO:0005261">
    <property type="term" value="F:monoatomic cation channel activity"/>
    <property type="evidence" value="ECO:0007669"/>
    <property type="project" value="UniProtKB-UniRule"/>
</dbReference>
<dbReference type="GO" id="GO:0032801">
    <property type="term" value="P:receptor catabolic process"/>
    <property type="evidence" value="ECO:0007669"/>
    <property type="project" value="UniProtKB-UniRule"/>
</dbReference>
<dbReference type="GO" id="GO:0052170">
    <property type="term" value="P:symbiont-mediated suppression of host innate immune response"/>
    <property type="evidence" value="ECO:0007669"/>
    <property type="project" value="UniProtKB-KW"/>
</dbReference>
<dbReference type="GO" id="GO:0039502">
    <property type="term" value="P:symbiont-mediated suppression of host type I interferon-mediated signaling pathway"/>
    <property type="evidence" value="ECO:0007669"/>
    <property type="project" value="UniProtKB-UniRule"/>
</dbReference>
<dbReference type="GO" id="GO:0039587">
    <property type="term" value="P:symbiont-mediated-mediated suppression of host tetherin activity"/>
    <property type="evidence" value="ECO:0007669"/>
    <property type="project" value="UniProtKB-UniRule"/>
</dbReference>
<dbReference type="GO" id="GO:0019076">
    <property type="term" value="P:viral release from host cell"/>
    <property type="evidence" value="ECO:0007669"/>
    <property type="project" value="UniProtKB-UniRule"/>
</dbReference>
<dbReference type="Gene3D" id="1.10.195.10">
    <property type="entry name" value="HIV-1 VPU cytoplasmic domain"/>
    <property type="match status" value="1"/>
</dbReference>
<dbReference type="HAMAP" id="MF_04082">
    <property type="entry name" value="HIV_VPU"/>
    <property type="match status" value="1"/>
</dbReference>
<dbReference type="InterPro" id="IPR008187">
    <property type="entry name" value="Vpu"/>
</dbReference>
<dbReference type="InterPro" id="IPR009032">
    <property type="entry name" value="Vpu_cyt_dom_sf"/>
</dbReference>
<dbReference type="Pfam" id="PF00558">
    <property type="entry name" value="Vpu"/>
    <property type="match status" value="1"/>
</dbReference>
<dbReference type="SUPFAM" id="SSF57647">
    <property type="entry name" value="HIV-1 VPU cytoplasmic domain"/>
    <property type="match status" value="1"/>
</dbReference>
<sequence length="81" mass="9327">MQPSQIIAIAALVVAAIIAIVVWTIVFIEYRRIKRQRKIDCIIDRIRERAEDSGNESEGDREELSKLVEMGHHAPWDIDDL</sequence>
<evidence type="ECO:0000255" key="1">
    <source>
        <dbReference type="HAMAP-Rule" id="MF_04082"/>
    </source>
</evidence>
<accession>P12515</accession>
<keyword id="KW-0014">AIDS</keyword>
<keyword id="KW-0053">Apoptosis</keyword>
<keyword id="KW-1043">Host membrane</keyword>
<keyword id="KW-0945">Host-virus interaction</keyword>
<keyword id="KW-1090">Inhibition of host innate immune response by virus</keyword>
<keyword id="KW-1084">Inhibition of host tetherin by virus</keyword>
<keyword id="KW-0407">Ion channel</keyword>
<keyword id="KW-0406">Ion transport</keyword>
<keyword id="KW-0472">Membrane</keyword>
<keyword id="KW-0597">Phosphoprotein</keyword>
<keyword id="KW-0812">Transmembrane</keyword>
<keyword id="KW-1133">Transmembrane helix</keyword>
<keyword id="KW-0813">Transport</keyword>
<keyword id="KW-0899">Viral immunoevasion</keyword>